<gene>
    <name type="ordered locus">Pret-049</name>
</gene>
<sequence length="151" mass="17597">MMALLHKEKLIECIENEVLSGGTVLLLVKNIVVSEISYMGDSYKYFTFNANHDLKSKEDLKGATSKNIAKMIYNWIIKNPQNNKIWSGEPRTQIYFENDLYHTNYNHECIKDFWNVSTSVGPCIFNDRSIWCTKCTSFYPFTNIMSPNIFQ</sequence>
<accession>P0CA57</accession>
<name>VF151_ASFP4</name>
<feature type="chain" id="PRO_0000373532" description="Protein A151R">
    <location>
        <begin position="1"/>
        <end position="151"/>
    </location>
</feature>
<comment type="function">
    <text evidence="1">May participate in a redox cascade for the formation of disulfide bonds in viral proteins.</text>
</comment>
<comment type="cofactor">
    <cofactor evidence="1">
        <name>Zn(2+)</name>
        <dbReference type="ChEBI" id="CHEBI:29105"/>
    </cofactor>
    <text evidence="1">Binds 1 Zn(2+) ion.</text>
</comment>
<comment type="subunit">
    <text evidence="1">Monomer (By similarity). Homodimer (By similarity). Interacts with protein B119L (By similarity). Interacts with membrane protein E248R (By similarity).</text>
</comment>
<comment type="induction">
    <text evidence="2">Expressed in the early phase of the viral replicative cycle.</text>
</comment>
<comment type="similarity">
    <text evidence="2">Belongs to the asfivirus A151R family.</text>
</comment>
<keyword id="KW-0244">Early protein</keyword>
<keyword id="KW-0479">Metal-binding</keyword>
<keyword id="KW-0862">Zinc</keyword>
<dbReference type="EMBL" id="AY261363">
    <property type="status" value="NOT_ANNOTATED_CDS"/>
    <property type="molecule type" value="Genomic_DNA"/>
</dbReference>
<dbReference type="SMR" id="P0CA57"/>
<dbReference type="Proteomes" id="UP000000859">
    <property type="component" value="Segment"/>
</dbReference>
<dbReference type="GO" id="GO:0046872">
    <property type="term" value="F:metal ion binding"/>
    <property type="evidence" value="ECO:0007669"/>
    <property type="project" value="UniProtKB-KW"/>
</dbReference>
<evidence type="ECO:0000250" key="1">
    <source>
        <dbReference type="UniProtKB" id="Q65140"/>
    </source>
</evidence>
<evidence type="ECO:0000305" key="2"/>
<reference key="1">
    <citation type="submission" date="2003-03" db="EMBL/GenBank/DDBJ databases">
        <title>African swine fever virus genomes.</title>
        <authorList>
            <person name="Kutish G.F."/>
            <person name="Rock D.L."/>
        </authorList>
    </citation>
    <scope>NUCLEOTIDE SEQUENCE [LARGE SCALE GENOMIC DNA]</scope>
</reference>
<proteinExistence type="inferred from homology"/>
<organismHost>
    <name type="scientific">Ornithodoros</name>
    <name type="common">relapsing fever ticks</name>
    <dbReference type="NCBI Taxonomy" id="6937"/>
</organismHost>
<organismHost>
    <name type="scientific">Phacochoerus aethiopicus</name>
    <name type="common">Warthog</name>
    <dbReference type="NCBI Taxonomy" id="85517"/>
</organismHost>
<organismHost>
    <name type="scientific">Phacochoerus africanus</name>
    <name type="common">Warthog</name>
    <dbReference type="NCBI Taxonomy" id="41426"/>
</organismHost>
<organismHost>
    <name type="scientific">Potamochoerus larvatus</name>
    <name type="common">Bushpig</name>
    <dbReference type="NCBI Taxonomy" id="273792"/>
</organismHost>
<organismHost>
    <name type="scientific">Sus scrofa</name>
    <name type="common">Pig</name>
    <dbReference type="NCBI Taxonomy" id="9823"/>
</organismHost>
<organism>
    <name type="scientific">African swine fever virus (isolate Tick/South Africa/Pretoriuskop Pr4/1996)</name>
    <name type="common">ASFV</name>
    <dbReference type="NCBI Taxonomy" id="561443"/>
    <lineage>
        <taxon>Viruses</taxon>
        <taxon>Varidnaviria</taxon>
        <taxon>Bamfordvirae</taxon>
        <taxon>Nucleocytoviricota</taxon>
        <taxon>Pokkesviricetes</taxon>
        <taxon>Asfuvirales</taxon>
        <taxon>Asfarviridae</taxon>
        <taxon>Asfivirus</taxon>
        <taxon>African swine fever virus</taxon>
    </lineage>
</organism>
<protein>
    <recommendedName>
        <fullName>Protein A151R</fullName>
        <shortName>pA151R</shortName>
    </recommendedName>
</protein>